<name>GRAR_STAAS</name>
<feature type="chain" id="PRO_0000347900" description="Response regulator protein GraR">
    <location>
        <begin position="1"/>
        <end position="224"/>
    </location>
</feature>
<feature type="domain" description="Response regulatory" evidence="4">
    <location>
        <begin position="2"/>
        <end position="115"/>
    </location>
</feature>
<feature type="DNA-binding region" description="OmpR/PhoB-type" evidence="5">
    <location>
        <begin position="126"/>
        <end position="224"/>
    </location>
</feature>
<feature type="modified residue" description="4-aspartylphosphate" evidence="4">
    <location>
        <position position="51"/>
    </location>
</feature>
<feature type="modified residue" description="Phosphothreonine" evidence="3">
    <location>
        <position position="128"/>
    </location>
</feature>
<feature type="modified residue" description="Phosphothreonine" evidence="3">
    <location>
        <position position="130"/>
    </location>
</feature>
<feature type="modified residue" description="Phosphothreonine" evidence="3">
    <location>
        <position position="149"/>
    </location>
</feature>
<keyword id="KW-0010">Activator</keyword>
<keyword id="KW-0046">Antibiotic resistance</keyword>
<keyword id="KW-0963">Cytoplasm</keyword>
<keyword id="KW-0238">DNA-binding</keyword>
<keyword id="KW-0597">Phosphoprotein</keyword>
<keyword id="KW-0678">Repressor</keyword>
<keyword id="KW-0804">Transcription</keyword>
<keyword id="KW-0805">Transcription regulation</keyword>
<keyword id="KW-0902">Two-component regulatory system</keyword>
<keyword id="KW-0843">Virulence</keyword>
<evidence type="ECO:0000250" key="1"/>
<evidence type="ECO:0000250" key="2">
    <source>
        <dbReference type="UniProtKB" id="Q2G0D9"/>
    </source>
</evidence>
<evidence type="ECO:0000250" key="3">
    <source>
        <dbReference type="UniProtKB" id="Q2G0E0"/>
    </source>
</evidence>
<evidence type="ECO:0000255" key="4">
    <source>
        <dbReference type="PROSITE-ProRule" id="PRU00169"/>
    </source>
</evidence>
<evidence type="ECO:0000255" key="5">
    <source>
        <dbReference type="PROSITE-ProRule" id="PRU01091"/>
    </source>
</evidence>
<reference key="1">
    <citation type="journal article" date="2004" name="Proc. Natl. Acad. Sci. U.S.A.">
        <title>Complete genomes of two clinical Staphylococcus aureus strains: evidence for the rapid evolution of virulence and drug resistance.</title>
        <authorList>
            <person name="Holden M.T.G."/>
            <person name="Feil E.J."/>
            <person name="Lindsay J.A."/>
            <person name="Peacock S.J."/>
            <person name="Day N.P.J."/>
            <person name="Enright M.C."/>
            <person name="Foster T.J."/>
            <person name="Moore C.E."/>
            <person name="Hurst L."/>
            <person name="Atkin R."/>
            <person name="Barron A."/>
            <person name="Bason N."/>
            <person name="Bentley S.D."/>
            <person name="Chillingworth C."/>
            <person name="Chillingworth T."/>
            <person name="Churcher C."/>
            <person name="Clark L."/>
            <person name="Corton C."/>
            <person name="Cronin A."/>
            <person name="Doggett J."/>
            <person name="Dowd L."/>
            <person name="Feltwell T."/>
            <person name="Hance Z."/>
            <person name="Harris B."/>
            <person name="Hauser H."/>
            <person name="Holroyd S."/>
            <person name="Jagels K."/>
            <person name="James K.D."/>
            <person name="Lennard N."/>
            <person name="Line A."/>
            <person name="Mayes R."/>
            <person name="Moule S."/>
            <person name="Mungall K."/>
            <person name="Ormond D."/>
            <person name="Quail M.A."/>
            <person name="Rabbinowitsch E."/>
            <person name="Rutherford K.M."/>
            <person name="Sanders M."/>
            <person name="Sharp S."/>
            <person name="Simmonds M."/>
            <person name="Stevens K."/>
            <person name="Whitehead S."/>
            <person name="Barrell B.G."/>
            <person name="Spratt B.G."/>
            <person name="Parkhill J."/>
        </authorList>
    </citation>
    <scope>NUCLEOTIDE SEQUENCE [LARGE SCALE GENOMIC DNA]</scope>
    <source>
        <strain>MSSA476</strain>
    </source>
</reference>
<proteinExistence type="inferred from homology"/>
<dbReference type="EMBL" id="BX571857">
    <property type="protein sequence ID" value="CAG42400.1"/>
    <property type="molecule type" value="Genomic_DNA"/>
</dbReference>
<dbReference type="RefSeq" id="WP_001166500.1">
    <property type="nucleotide sequence ID" value="NC_002953.3"/>
</dbReference>
<dbReference type="SMR" id="Q6GBH1"/>
<dbReference type="KEGG" id="sas:SAS0624"/>
<dbReference type="HOGENOM" id="CLU_000445_30_3_9"/>
<dbReference type="GO" id="GO:0005829">
    <property type="term" value="C:cytosol"/>
    <property type="evidence" value="ECO:0007669"/>
    <property type="project" value="TreeGrafter"/>
</dbReference>
<dbReference type="GO" id="GO:0032993">
    <property type="term" value="C:protein-DNA complex"/>
    <property type="evidence" value="ECO:0007669"/>
    <property type="project" value="TreeGrafter"/>
</dbReference>
<dbReference type="GO" id="GO:0000156">
    <property type="term" value="F:phosphorelay response regulator activity"/>
    <property type="evidence" value="ECO:0007669"/>
    <property type="project" value="TreeGrafter"/>
</dbReference>
<dbReference type="GO" id="GO:0000976">
    <property type="term" value="F:transcription cis-regulatory region binding"/>
    <property type="evidence" value="ECO:0007669"/>
    <property type="project" value="TreeGrafter"/>
</dbReference>
<dbReference type="GO" id="GO:0006355">
    <property type="term" value="P:regulation of DNA-templated transcription"/>
    <property type="evidence" value="ECO:0007669"/>
    <property type="project" value="InterPro"/>
</dbReference>
<dbReference type="GO" id="GO:0046677">
    <property type="term" value="P:response to antibiotic"/>
    <property type="evidence" value="ECO:0007669"/>
    <property type="project" value="UniProtKB-KW"/>
</dbReference>
<dbReference type="CDD" id="cd18159">
    <property type="entry name" value="REC_OmpR_NsrR-like"/>
    <property type="match status" value="1"/>
</dbReference>
<dbReference type="CDD" id="cd00383">
    <property type="entry name" value="trans_reg_C"/>
    <property type="match status" value="1"/>
</dbReference>
<dbReference type="FunFam" id="3.40.50.2300:FF:000232">
    <property type="entry name" value="Response regulator GraR"/>
    <property type="match status" value="1"/>
</dbReference>
<dbReference type="FunFam" id="1.10.10.10:FF:000546">
    <property type="entry name" value="Two-component response regulator GraR"/>
    <property type="match status" value="1"/>
</dbReference>
<dbReference type="Gene3D" id="3.40.50.2300">
    <property type="match status" value="1"/>
</dbReference>
<dbReference type="Gene3D" id="1.10.10.10">
    <property type="entry name" value="Winged helix-like DNA-binding domain superfamily/Winged helix DNA-binding domain"/>
    <property type="match status" value="1"/>
</dbReference>
<dbReference type="InterPro" id="IPR011006">
    <property type="entry name" value="CheY-like_superfamily"/>
</dbReference>
<dbReference type="InterPro" id="IPR001867">
    <property type="entry name" value="OmpR/PhoB-type_DNA-bd"/>
</dbReference>
<dbReference type="InterPro" id="IPR016032">
    <property type="entry name" value="Sig_transdc_resp-reg_C-effctor"/>
</dbReference>
<dbReference type="InterPro" id="IPR001789">
    <property type="entry name" value="Sig_transdc_resp-reg_receiver"/>
</dbReference>
<dbReference type="InterPro" id="IPR039420">
    <property type="entry name" value="WalR-like"/>
</dbReference>
<dbReference type="InterPro" id="IPR036388">
    <property type="entry name" value="WH-like_DNA-bd_sf"/>
</dbReference>
<dbReference type="PANTHER" id="PTHR48111">
    <property type="entry name" value="REGULATOR OF RPOS"/>
    <property type="match status" value="1"/>
</dbReference>
<dbReference type="PANTHER" id="PTHR48111:SF27">
    <property type="entry name" value="SENSORY TRANSDUCTION PROTEIN BCER"/>
    <property type="match status" value="1"/>
</dbReference>
<dbReference type="Pfam" id="PF00072">
    <property type="entry name" value="Response_reg"/>
    <property type="match status" value="1"/>
</dbReference>
<dbReference type="Pfam" id="PF00486">
    <property type="entry name" value="Trans_reg_C"/>
    <property type="match status" value="1"/>
</dbReference>
<dbReference type="SMART" id="SM00448">
    <property type="entry name" value="REC"/>
    <property type="match status" value="1"/>
</dbReference>
<dbReference type="SMART" id="SM00862">
    <property type="entry name" value="Trans_reg_C"/>
    <property type="match status" value="1"/>
</dbReference>
<dbReference type="SUPFAM" id="SSF46894">
    <property type="entry name" value="C-terminal effector domain of the bipartite response regulators"/>
    <property type="match status" value="1"/>
</dbReference>
<dbReference type="SUPFAM" id="SSF52172">
    <property type="entry name" value="CheY-like"/>
    <property type="match status" value="1"/>
</dbReference>
<dbReference type="PROSITE" id="PS51755">
    <property type="entry name" value="OMPR_PHOB"/>
    <property type="match status" value="1"/>
</dbReference>
<dbReference type="PROSITE" id="PS50110">
    <property type="entry name" value="RESPONSE_REGULATORY"/>
    <property type="match status" value="1"/>
</dbReference>
<protein>
    <recommendedName>
        <fullName>Response regulator protein GraR</fullName>
    </recommendedName>
    <alternativeName>
        <fullName>Glycopeptide resistance-associated protein R</fullName>
    </alternativeName>
</protein>
<organism>
    <name type="scientific">Staphylococcus aureus (strain MSSA476)</name>
    <dbReference type="NCBI Taxonomy" id="282459"/>
    <lineage>
        <taxon>Bacteria</taxon>
        <taxon>Bacillati</taxon>
        <taxon>Bacillota</taxon>
        <taxon>Bacilli</taxon>
        <taxon>Bacillales</taxon>
        <taxon>Staphylococcaceae</taxon>
        <taxon>Staphylococcus</taxon>
    </lineage>
</organism>
<accession>Q6GBH1</accession>
<comment type="function">
    <text evidence="3">Member of the two-component regulatory system GraR/GraS involved in resistance against cationic antimicrobial peptides (CAMPs). Upon phosphorylation by GraS, functions as a transcription regulator by direct binding to promoter regions of target genes such as adhesins, exoproteins, transporters, toxins, and proteins involved in cell wall synthesis. Down-regulates the expression of many genes involved in RNA and amino acid synthesis or glycolysis.</text>
</comment>
<comment type="subunit">
    <text evidence="2">Interacts with GraX.</text>
</comment>
<comment type="subcellular location">
    <subcellularLocation>
        <location evidence="1">Cytoplasm</location>
    </subcellularLocation>
</comment>
<comment type="PTM">
    <text evidence="3">Phosphorylated by GraS. Phosphorylated by Stk1; phosphorylation increases the DNA-binding activity of GraR.</text>
</comment>
<gene>
    <name type="primary">graR</name>
    <name type="ordered locus">SAS0624</name>
</gene>
<sequence length="224" mass="26066">MQILLVEDDNTLFQELKKELEQWDFNVAGIEDFGKVMDTFESFNPEIVILDVQLPKYDGFYWCRKMREVSNVPILFLSSRDNPMDQVMSMELGADDYMQKPFYTNVLIAKLQAIYRRVYEFTAEEKRTLTWQDAVVDLSKDSIQKGDDTIFLSKTEMIILEILITKKNQIVSRDTIITALWDDEAFVSDNTLTVNVNRLRKKLSEISMDSAIETKVGKGYMAHE</sequence>